<name>LIS12_TALMQ</name>
<reference key="1">
    <citation type="journal article" date="2015" name="Genome Announc.">
        <title>Genome sequence of the AIDS-associated pathogen Penicillium marneffei (ATCC18224) and its near taxonomic relative Talaromyces stipitatus (ATCC10500).</title>
        <authorList>
            <person name="Nierman W.C."/>
            <person name="Fedorova-Abrams N.D."/>
            <person name="Andrianopoulos A."/>
        </authorList>
    </citation>
    <scope>NUCLEOTIDE SEQUENCE [LARGE SCALE GENOMIC DNA]</scope>
    <source>
        <strain>ATCC 18224 / CBS 334.59 / QM 7333</strain>
    </source>
</reference>
<proteinExistence type="inferred from homology"/>
<keyword id="KW-0131">Cell cycle</keyword>
<keyword id="KW-0132">Cell division</keyword>
<keyword id="KW-0175">Coiled coil</keyword>
<keyword id="KW-0963">Cytoplasm</keyword>
<keyword id="KW-0206">Cytoskeleton</keyword>
<keyword id="KW-0493">Microtubule</keyword>
<keyword id="KW-0498">Mitosis</keyword>
<keyword id="KW-1185">Reference proteome</keyword>
<keyword id="KW-0677">Repeat</keyword>
<keyword id="KW-0813">Transport</keyword>
<keyword id="KW-0853">WD repeat</keyword>
<sequence>MSQILTTRQAEELHKSMVAYLSSLEASKSTAALREELVLPDTFDDATCKKYAGLLEKKFLTCSLKANPSKDNGLSALQILDLESKVAGLQAELSSLTLTSRSKGGQDPDNWLPGPASTRTFESHRDAITCIAFHPIFTSLASSSEDCTIKIWDWELGELERTLKGHIRAVTGLDFGGQKGNTLLASCSSDLTVKLWDPSKGYANIRTLSGHDHSVSAVRFLTSTENLLVSAGRDASIRIWDVSTGYCVKVLRSSDAWIRDISSSFDGKWLVAGGRDQAVTVWEVATAEQKSALLGHENYIECCVIAPPTSYEHLATLAGLKKPPAPSSSCEFIATGARDKTIRLWESRGRLIKTLVGHDNWVRDLVFHPNGKHLISVADDKTIRCWDLSQEGKLVKTIDNAHSHFVTCMRWGPSATTDVETTNGVTNKGTTKSKFQCVIATGSADSCVRVFS</sequence>
<feature type="chain" id="PRO_0000405091" description="Nuclear distribution protein nudF 2">
    <location>
        <begin position="1"/>
        <end position="452"/>
    </location>
</feature>
<feature type="repeat" description="WD 1">
    <location>
        <begin position="123"/>
        <end position="164"/>
    </location>
</feature>
<feature type="repeat" description="WD 2">
    <location>
        <begin position="166"/>
        <end position="206"/>
    </location>
</feature>
<feature type="repeat" description="WD 3">
    <location>
        <begin position="210"/>
        <end position="250"/>
    </location>
</feature>
<feature type="repeat" description="WD 4">
    <location>
        <begin position="253"/>
        <end position="292"/>
    </location>
</feature>
<feature type="repeat" description="WD 5">
    <location>
        <begin position="295"/>
        <end position="355"/>
    </location>
</feature>
<feature type="repeat" description="WD 6">
    <location>
        <begin position="357"/>
        <end position="396"/>
    </location>
</feature>
<feature type="repeat" description="WD 7">
    <location>
        <begin position="401"/>
        <end position="449"/>
    </location>
</feature>
<feature type="coiled-coil region" evidence="1">
    <location>
        <begin position="76"/>
        <end position="101"/>
    </location>
</feature>
<organism>
    <name type="scientific">Talaromyces marneffei (strain ATCC 18224 / CBS 334.59 / QM 7333)</name>
    <name type="common">Penicillium marneffei</name>
    <dbReference type="NCBI Taxonomy" id="441960"/>
    <lineage>
        <taxon>Eukaryota</taxon>
        <taxon>Fungi</taxon>
        <taxon>Dikarya</taxon>
        <taxon>Ascomycota</taxon>
        <taxon>Pezizomycotina</taxon>
        <taxon>Eurotiomycetes</taxon>
        <taxon>Eurotiomycetidae</taxon>
        <taxon>Eurotiales</taxon>
        <taxon>Trichocomaceae</taxon>
        <taxon>Talaromyces</taxon>
        <taxon>Talaromyces sect. Talaromyces</taxon>
    </lineage>
</organism>
<evidence type="ECO:0000255" key="1">
    <source>
        <dbReference type="HAMAP-Rule" id="MF_03141"/>
    </source>
</evidence>
<comment type="function">
    <text evidence="1">Positively regulates the activity of the minus-end directed microtubule motor protein dynein. May enhance dynein-mediated microtubule sliding by targeting dynein to the microtubule plus end. Required for nuclear migration during vegetative growth as well as development. Required for retrograde early endosome (EE) transport from the hyphal tip. Required for localization of dynein to the mitotic spindle poles. Recruits additional proteins to the dynein complex at SPBs.</text>
</comment>
<comment type="subunit">
    <text evidence="1">Self-associates. Interacts with nudE and dynein.</text>
</comment>
<comment type="subcellular location">
    <subcellularLocation>
        <location evidence="1">Cytoplasm</location>
        <location evidence="1">Cytoskeleton</location>
    </subcellularLocation>
    <subcellularLocation>
        <location evidence="1">Cytoplasm</location>
        <location evidence="1">Cytoskeleton</location>
        <location evidence="1">Spindle pole</location>
    </subcellularLocation>
    <text evidence="1">Localizes to the plus ends of microtubules at the hyphal tip and the mitotic spindle poles.</text>
</comment>
<comment type="similarity">
    <text evidence="1">Belongs to the WD repeat LIS1/nudF family.</text>
</comment>
<gene>
    <name evidence="1" type="primary">nudF-2</name>
    <name evidence="1" type="synonym">lis1-2</name>
    <name type="ORF">PMAA_075960</name>
</gene>
<dbReference type="EMBL" id="DS995900">
    <property type="protein sequence ID" value="EEA26529.1"/>
    <property type="molecule type" value="Genomic_DNA"/>
</dbReference>
<dbReference type="RefSeq" id="XP_002147076.1">
    <property type="nucleotide sequence ID" value="XM_002147040.1"/>
</dbReference>
<dbReference type="SMR" id="B6QC06"/>
<dbReference type="STRING" id="441960.B6QC06"/>
<dbReference type="VEuPathDB" id="FungiDB:PMAA_075960"/>
<dbReference type="HOGENOM" id="CLU_000288_57_15_1"/>
<dbReference type="PhylomeDB" id="B6QC06"/>
<dbReference type="Proteomes" id="UP000001294">
    <property type="component" value="Unassembled WGS sequence"/>
</dbReference>
<dbReference type="GO" id="GO:0005737">
    <property type="term" value="C:cytoplasm"/>
    <property type="evidence" value="ECO:0007669"/>
    <property type="project" value="UniProtKB-UniRule"/>
</dbReference>
<dbReference type="GO" id="GO:0005874">
    <property type="term" value="C:microtubule"/>
    <property type="evidence" value="ECO:0007669"/>
    <property type="project" value="UniProtKB-KW"/>
</dbReference>
<dbReference type="GO" id="GO:0005875">
    <property type="term" value="C:microtubule associated complex"/>
    <property type="evidence" value="ECO:0007669"/>
    <property type="project" value="UniProtKB-UniRule"/>
</dbReference>
<dbReference type="GO" id="GO:0000922">
    <property type="term" value="C:spindle pole"/>
    <property type="evidence" value="ECO:0007669"/>
    <property type="project" value="UniProtKB-SubCell"/>
</dbReference>
<dbReference type="GO" id="GO:0070840">
    <property type="term" value="F:dynein complex binding"/>
    <property type="evidence" value="ECO:0007669"/>
    <property type="project" value="UniProtKB-UniRule"/>
</dbReference>
<dbReference type="GO" id="GO:0051301">
    <property type="term" value="P:cell division"/>
    <property type="evidence" value="ECO:0007669"/>
    <property type="project" value="UniProtKB-KW"/>
</dbReference>
<dbReference type="GO" id="GO:0000132">
    <property type="term" value="P:establishment of mitotic spindle orientation"/>
    <property type="evidence" value="ECO:0007669"/>
    <property type="project" value="UniProtKB-UniRule"/>
</dbReference>
<dbReference type="GO" id="GO:0051012">
    <property type="term" value="P:microtubule sliding"/>
    <property type="evidence" value="ECO:0007669"/>
    <property type="project" value="UniProtKB-UniRule"/>
</dbReference>
<dbReference type="CDD" id="cd00200">
    <property type="entry name" value="WD40"/>
    <property type="match status" value="1"/>
</dbReference>
<dbReference type="FunFam" id="2.130.10.10:FF:000342">
    <property type="entry name" value="Nuclear distribution protein PAC1"/>
    <property type="match status" value="1"/>
</dbReference>
<dbReference type="Gene3D" id="1.20.960.30">
    <property type="match status" value="1"/>
</dbReference>
<dbReference type="Gene3D" id="2.130.10.10">
    <property type="entry name" value="YVTN repeat-like/Quinoprotein amine dehydrogenase"/>
    <property type="match status" value="1"/>
</dbReference>
<dbReference type="HAMAP" id="MF_03141">
    <property type="entry name" value="lis1"/>
    <property type="match status" value="1"/>
</dbReference>
<dbReference type="InterPro" id="IPR017252">
    <property type="entry name" value="Dynein_regulator_LIS1"/>
</dbReference>
<dbReference type="InterPro" id="IPR020472">
    <property type="entry name" value="G-protein_beta_WD-40_rep"/>
</dbReference>
<dbReference type="InterPro" id="IPR037190">
    <property type="entry name" value="LIS1_N"/>
</dbReference>
<dbReference type="InterPro" id="IPR056795">
    <property type="entry name" value="PAC1-like_LisH-like_dom"/>
</dbReference>
<dbReference type="InterPro" id="IPR015943">
    <property type="entry name" value="WD40/YVTN_repeat-like_dom_sf"/>
</dbReference>
<dbReference type="InterPro" id="IPR019775">
    <property type="entry name" value="WD40_repeat_CS"/>
</dbReference>
<dbReference type="InterPro" id="IPR036322">
    <property type="entry name" value="WD40_repeat_dom_sf"/>
</dbReference>
<dbReference type="InterPro" id="IPR001680">
    <property type="entry name" value="WD40_rpt"/>
</dbReference>
<dbReference type="PANTHER" id="PTHR19848:SF8">
    <property type="entry name" value="F-BOX AND WD REPEAT DOMAIN CONTAINING 7"/>
    <property type="match status" value="1"/>
</dbReference>
<dbReference type="PANTHER" id="PTHR19848">
    <property type="entry name" value="WD40 REPEAT PROTEIN"/>
    <property type="match status" value="1"/>
</dbReference>
<dbReference type="Pfam" id="PF24951">
    <property type="entry name" value="LisH_PAC1"/>
    <property type="match status" value="1"/>
</dbReference>
<dbReference type="Pfam" id="PF00400">
    <property type="entry name" value="WD40"/>
    <property type="match status" value="7"/>
</dbReference>
<dbReference type="PIRSF" id="PIRSF037647">
    <property type="entry name" value="Dynein_regulator_Lis1"/>
    <property type="match status" value="1"/>
</dbReference>
<dbReference type="PRINTS" id="PR00320">
    <property type="entry name" value="GPROTEINBRPT"/>
</dbReference>
<dbReference type="SMART" id="SM00320">
    <property type="entry name" value="WD40"/>
    <property type="match status" value="7"/>
</dbReference>
<dbReference type="SUPFAM" id="SSF109925">
    <property type="entry name" value="Lissencephaly-1 protein (Lis-1, PAF-AH alpha) N-terminal domain"/>
    <property type="match status" value="1"/>
</dbReference>
<dbReference type="SUPFAM" id="SSF50978">
    <property type="entry name" value="WD40 repeat-like"/>
    <property type="match status" value="1"/>
</dbReference>
<dbReference type="PROSITE" id="PS00678">
    <property type="entry name" value="WD_REPEATS_1"/>
    <property type="match status" value="3"/>
</dbReference>
<dbReference type="PROSITE" id="PS50082">
    <property type="entry name" value="WD_REPEATS_2"/>
    <property type="match status" value="5"/>
</dbReference>
<dbReference type="PROSITE" id="PS50294">
    <property type="entry name" value="WD_REPEATS_REGION"/>
    <property type="match status" value="1"/>
</dbReference>
<accession>B6QC06</accession>
<protein>
    <recommendedName>
        <fullName evidence="1">Nuclear distribution protein nudF 2</fullName>
    </recommendedName>
    <alternativeName>
        <fullName evidence="1">Lissencephaly-1 homolog 2</fullName>
        <shortName evidence="1">LIS-1 2</shortName>
    </alternativeName>
</protein>